<keyword id="KW-0025">Alternative splicing</keyword>
<keyword id="KW-0202">Cytokine</keyword>
<keyword id="KW-0456">Lyase</keyword>
<keyword id="KW-1267">Proteomics identification</keyword>
<keyword id="KW-0663">Pyridoxal phosphate</keyword>
<keyword id="KW-1185">Reference proteome</keyword>
<keyword id="KW-0964">Secreted</keyword>
<reference key="1">
    <citation type="journal article" date="2009" name="Arthritis Rheum.">
        <title>A novel T cell cytokine, secreted osteoclastogenic factor of activated T cells, induces osteoclast formation in a RANKL-independent manner.</title>
        <authorList>
            <person name="Rifas L."/>
            <person name="Weitzmann M.N."/>
        </authorList>
    </citation>
    <scope>NUCLEOTIDE SEQUENCE [MRNA] (ISOFORM SOFAT)</scope>
    <scope>FUNCTION</scope>
    <scope>SUBCELLULAR LOCATION</scope>
    <source>
        <tissue>Peripheral blood T-cell</tissue>
    </source>
</reference>
<reference key="2">
    <citation type="journal article" date="2004" name="Nat. Genet.">
        <title>Complete sequencing and characterization of 21,243 full-length human cDNAs.</title>
        <authorList>
            <person name="Ota T."/>
            <person name="Suzuki Y."/>
            <person name="Nishikawa T."/>
            <person name="Otsuki T."/>
            <person name="Sugiyama T."/>
            <person name="Irie R."/>
            <person name="Wakamatsu A."/>
            <person name="Hayashi K."/>
            <person name="Sato H."/>
            <person name="Nagai K."/>
            <person name="Kimura K."/>
            <person name="Makita H."/>
            <person name="Sekine M."/>
            <person name="Obayashi M."/>
            <person name="Nishi T."/>
            <person name="Shibahara T."/>
            <person name="Tanaka T."/>
            <person name="Ishii S."/>
            <person name="Yamamoto J."/>
            <person name="Saito K."/>
            <person name="Kawai Y."/>
            <person name="Isono Y."/>
            <person name="Nakamura Y."/>
            <person name="Nagahari K."/>
            <person name="Murakami K."/>
            <person name="Yasuda T."/>
            <person name="Iwayanagi T."/>
            <person name="Wagatsuma M."/>
            <person name="Shiratori A."/>
            <person name="Sudo H."/>
            <person name="Hosoiri T."/>
            <person name="Kaku Y."/>
            <person name="Kodaira H."/>
            <person name="Kondo H."/>
            <person name="Sugawara M."/>
            <person name="Takahashi M."/>
            <person name="Kanda K."/>
            <person name="Yokoi T."/>
            <person name="Furuya T."/>
            <person name="Kikkawa E."/>
            <person name="Omura Y."/>
            <person name="Abe K."/>
            <person name="Kamihara K."/>
            <person name="Katsuta N."/>
            <person name="Sato K."/>
            <person name="Tanikawa M."/>
            <person name="Yamazaki M."/>
            <person name="Ninomiya K."/>
            <person name="Ishibashi T."/>
            <person name="Yamashita H."/>
            <person name="Murakawa K."/>
            <person name="Fujimori K."/>
            <person name="Tanai H."/>
            <person name="Kimata M."/>
            <person name="Watanabe M."/>
            <person name="Hiraoka S."/>
            <person name="Chiba Y."/>
            <person name="Ishida S."/>
            <person name="Ono Y."/>
            <person name="Takiguchi S."/>
            <person name="Watanabe S."/>
            <person name="Yosida M."/>
            <person name="Hotuta T."/>
            <person name="Kusano J."/>
            <person name="Kanehori K."/>
            <person name="Takahashi-Fujii A."/>
            <person name="Hara H."/>
            <person name="Tanase T.-O."/>
            <person name="Nomura Y."/>
            <person name="Togiya S."/>
            <person name="Komai F."/>
            <person name="Hara R."/>
            <person name="Takeuchi K."/>
            <person name="Arita M."/>
            <person name="Imose N."/>
            <person name="Musashino K."/>
            <person name="Yuuki H."/>
            <person name="Oshima A."/>
            <person name="Sasaki N."/>
            <person name="Aotsuka S."/>
            <person name="Yoshikawa Y."/>
            <person name="Matsunawa H."/>
            <person name="Ichihara T."/>
            <person name="Shiohata N."/>
            <person name="Sano S."/>
            <person name="Moriya S."/>
            <person name="Momiyama H."/>
            <person name="Satoh N."/>
            <person name="Takami S."/>
            <person name="Terashima Y."/>
            <person name="Suzuki O."/>
            <person name="Nakagawa S."/>
            <person name="Senoh A."/>
            <person name="Mizoguchi H."/>
            <person name="Goto Y."/>
            <person name="Shimizu F."/>
            <person name="Wakebe H."/>
            <person name="Hishigaki H."/>
            <person name="Watanabe T."/>
            <person name="Sugiyama A."/>
            <person name="Takemoto M."/>
            <person name="Kawakami B."/>
            <person name="Yamazaki M."/>
            <person name="Watanabe K."/>
            <person name="Kumagai A."/>
            <person name="Itakura S."/>
            <person name="Fukuzumi Y."/>
            <person name="Fujimori Y."/>
            <person name="Komiyama M."/>
            <person name="Tashiro H."/>
            <person name="Tanigami A."/>
            <person name="Fujiwara T."/>
            <person name="Ono T."/>
            <person name="Yamada K."/>
            <person name="Fujii Y."/>
            <person name="Ozaki K."/>
            <person name="Hirao M."/>
            <person name="Ohmori Y."/>
            <person name="Kawabata A."/>
            <person name="Hikiji T."/>
            <person name="Kobatake N."/>
            <person name="Inagaki H."/>
            <person name="Ikema Y."/>
            <person name="Okamoto S."/>
            <person name="Okitani R."/>
            <person name="Kawakami T."/>
            <person name="Noguchi S."/>
            <person name="Itoh T."/>
            <person name="Shigeta K."/>
            <person name="Senba T."/>
            <person name="Matsumura K."/>
            <person name="Nakajima Y."/>
            <person name="Mizuno T."/>
            <person name="Morinaga M."/>
            <person name="Sasaki M."/>
            <person name="Togashi T."/>
            <person name="Oyama M."/>
            <person name="Hata H."/>
            <person name="Watanabe M."/>
            <person name="Komatsu T."/>
            <person name="Mizushima-Sugano J."/>
            <person name="Satoh T."/>
            <person name="Shirai Y."/>
            <person name="Takahashi Y."/>
            <person name="Nakagawa K."/>
            <person name="Okumura K."/>
            <person name="Nagase T."/>
            <person name="Nomura N."/>
            <person name="Kikuchi H."/>
            <person name="Masuho Y."/>
            <person name="Yamashita R."/>
            <person name="Nakai K."/>
            <person name="Yada T."/>
            <person name="Nakamura Y."/>
            <person name="Ohara O."/>
            <person name="Isogai T."/>
            <person name="Sugano S."/>
        </authorList>
    </citation>
    <scope>NUCLEOTIDE SEQUENCE [LARGE SCALE MRNA] (ISOFORM 1)</scope>
    <scope>NUCLEOTIDE SEQUENCE [LARGE SCALE MRNA] OF 63-484 (ISOFORM 4)</scope>
    <scope>VARIANT GLU-41</scope>
    <source>
        <tissue>Ovarian carcinoma</tissue>
        <tissue>Tongue</tissue>
    </source>
</reference>
<reference key="3">
    <citation type="journal article" date="2005" name="Nature">
        <title>Generation and annotation of the DNA sequences of human chromosomes 2 and 4.</title>
        <authorList>
            <person name="Hillier L.W."/>
            <person name="Graves T.A."/>
            <person name="Fulton R.S."/>
            <person name="Fulton L.A."/>
            <person name="Pepin K.H."/>
            <person name="Minx P."/>
            <person name="Wagner-McPherson C."/>
            <person name="Layman D."/>
            <person name="Wylie K."/>
            <person name="Sekhon M."/>
            <person name="Becker M.C."/>
            <person name="Fewell G.A."/>
            <person name="Delehaunty K.D."/>
            <person name="Miner T.L."/>
            <person name="Nash W.E."/>
            <person name="Kremitzki C."/>
            <person name="Oddy L."/>
            <person name="Du H."/>
            <person name="Sun H."/>
            <person name="Bradshaw-Cordum H."/>
            <person name="Ali J."/>
            <person name="Carter J."/>
            <person name="Cordes M."/>
            <person name="Harris A."/>
            <person name="Isak A."/>
            <person name="van Brunt A."/>
            <person name="Nguyen C."/>
            <person name="Du F."/>
            <person name="Courtney L."/>
            <person name="Kalicki J."/>
            <person name="Ozersky P."/>
            <person name="Abbott S."/>
            <person name="Armstrong J."/>
            <person name="Belter E.A."/>
            <person name="Caruso L."/>
            <person name="Cedroni M."/>
            <person name="Cotton M."/>
            <person name="Davidson T."/>
            <person name="Desai A."/>
            <person name="Elliott G."/>
            <person name="Erb T."/>
            <person name="Fronick C."/>
            <person name="Gaige T."/>
            <person name="Haakenson W."/>
            <person name="Haglund K."/>
            <person name="Holmes A."/>
            <person name="Harkins R."/>
            <person name="Kim K."/>
            <person name="Kruchowski S.S."/>
            <person name="Strong C.M."/>
            <person name="Grewal N."/>
            <person name="Goyea E."/>
            <person name="Hou S."/>
            <person name="Levy A."/>
            <person name="Martinka S."/>
            <person name="Mead K."/>
            <person name="McLellan M.D."/>
            <person name="Meyer R."/>
            <person name="Randall-Maher J."/>
            <person name="Tomlinson C."/>
            <person name="Dauphin-Kohlberg S."/>
            <person name="Kozlowicz-Reilly A."/>
            <person name="Shah N."/>
            <person name="Swearengen-Shahid S."/>
            <person name="Snider J."/>
            <person name="Strong J.T."/>
            <person name="Thompson J."/>
            <person name="Yoakum M."/>
            <person name="Leonard S."/>
            <person name="Pearman C."/>
            <person name="Trani L."/>
            <person name="Radionenko M."/>
            <person name="Waligorski J.E."/>
            <person name="Wang C."/>
            <person name="Rock S.M."/>
            <person name="Tin-Wollam A.-M."/>
            <person name="Maupin R."/>
            <person name="Latreille P."/>
            <person name="Wendl M.C."/>
            <person name="Yang S.-P."/>
            <person name="Pohl C."/>
            <person name="Wallis J.W."/>
            <person name="Spieth J."/>
            <person name="Bieri T.A."/>
            <person name="Berkowicz N."/>
            <person name="Nelson J.O."/>
            <person name="Osborne J."/>
            <person name="Ding L."/>
            <person name="Meyer R."/>
            <person name="Sabo A."/>
            <person name="Shotland Y."/>
            <person name="Sinha P."/>
            <person name="Wohldmann P.E."/>
            <person name="Cook L.L."/>
            <person name="Hickenbotham M.T."/>
            <person name="Eldred J."/>
            <person name="Williams D."/>
            <person name="Jones T.A."/>
            <person name="She X."/>
            <person name="Ciccarelli F.D."/>
            <person name="Izaurralde E."/>
            <person name="Taylor J."/>
            <person name="Schmutz J."/>
            <person name="Myers R.M."/>
            <person name="Cox D.R."/>
            <person name="Huang X."/>
            <person name="McPherson J.D."/>
            <person name="Mardis E.R."/>
            <person name="Clifton S.W."/>
            <person name="Warren W.C."/>
            <person name="Chinwalla A.T."/>
            <person name="Eddy S.R."/>
            <person name="Marra M.A."/>
            <person name="Ovcharenko I."/>
            <person name="Furey T.S."/>
            <person name="Miller W."/>
            <person name="Eichler E.E."/>
            <person name="Bork P."/>
            <person name="Suyama M."/>
            <person name="Torrents D."/>
            <person name="Waterston R.H."/>
            <person name="Wilson R.K."/>
        </authorList>
    </citation>
    <scope>NUCLEOTIDE SEQUENCE [LARGE SCALE GENOMIC DNA]</scope>
</reference>
<reference key="4">
    <citation type="journal article" date="2004" name="Genome Res.">
        <title>The status, quality, and expansion of the NIH full-length cDNA project: the Mammalian Gene Collection (MGC).</title>
        <authorList>
            <consortium name="The MGC Project Team"/>
        </authorList>
    </citation>
    <scope>NUCLEOTIDE SEQUENCE [LARGE SCALE MRNA] (ISOFORM 2)</scope>
    <scope>NUCLEOTIDE SEQUENCE [LARGE SCALE MRNA] OF 54-484 (ISOFORM 1)</scope>
    <scope>NUCLEOTIDE SEQUENCE [LARGE SCALE MRNA] OF 140-431 (ISOFORM 3)</scope>
    <scope>VARIANTS GLU-41 AND GLY-324</scope>
    <source>
        <tissue>Brain</tissue>
        <tissue>Colon</tissue>
        <tissue>Skin</tissue>
    </source>
</reference>
<accession>Q86YJ6</accession>
<accession>B3KTB1</accession>
<accession>B5MDX8</accession>
<accession>B7WPF8</accession>
<accession>D9ZZB8</accession>
<accession>Q6P2M7</accession>
<accession>Q6PI27</accession>
<accession>Q9NV54</accession>
<comment type="function">
    <molecule>Isoform 1</molecule>
    <text evidence="1">Acts as a catabolic phospho-lyase on both gamma- and beta-phosphorylated substrates. Degrades O-phospho-threonine (PThr) to alpha-ketobutyrate, ammonia and phosphate (By similarity).</text>
</comment>
<comment type="function">
    <molecule>Isoform SOFAT</molecule>
    <text evidence="4">Potent inducer of osteoblastic production of IL6. May act to exacerbate inflammation and/or bone turnover under inflammatory conditions.</text>
</comment>
<comment type="cofactor">
    <cofactor evidence="1">
        <name>pyridoxal 5'-phosphate</name>
        <dbReference type="ChEBI" id="CHEBI:597326"/>
    </cofactor>
</comment>
<comment type="subcellular location">
    <molecule>Isoform SOFAT</molecule>
    <subcellularLocation>
        <location>Secreted</location>
    </subcellularLocation>
    <text>Secreted by activated T-cells via a calcineurin-independent pathway.</text>
</comment>
<comment type="alternative products">
    <event type="alternative splicing"/>
    <isoform>
        <id>Q86YJ6-1</id>
        <name>1</name>
        <sequence type="displayed"/>
    </isoform>
    <isoform>
        <id>Q86YJ6-2</id>
        <name>2</name>
        <sequence type="described" ref="VSP_028469"/>
    </isoform>
    <isoform>
        <id>Q86YJ6-3</id>
        <name>3</name>
        <sequence type="described" ref="VSP_028470"/>
    </isoform>
    <isoform>
        <id>Q86YJ6-4</id>
        <name>4</name>
        <sequence type="described" ref="VSP_028468"/>
    </isoform>
    <isoform>
        <id>Q86YJ6-5</id>
        <name>SOFAT</name>
        <sequence type="described" ref="VSP_041659 VSP_041660"/>
    </isoform>
</comment>
<comment type="similarity">
    <text evidence="8">Belongs to the threonine synthase family.</text>
</comment>
<comment type="sequence caution" evidence="8">
    <conflict type="erroneous gene model prediction">
        <sequence resource="EMBL-CDS" id="AAX88906"/>
    </conflict>
</comment>
<comment type="sequence caution" evidence="8">
    <conflict type="erroneous initiation">
        <sequence resource="EMBL-CDS" id="BAA91904"/>
    </conflict>
    <text>Truncated N-terminus.</text>
</comment>
<sequence length="484" mass="54116">MWYVSTRGVAPRVNFEGALFSGYAPDGGLFMPEELPQLDRGTLCQWSTLSYPGLVKELCALFIGSELLPKDELNDLIDRAFSRFRHREVVHLSRLRNGLNVLELWHGVTYAFKDLSLSCTTQFLQYFLEKREKHVTVVVGTSGDTGSAAIESVQGAKNMDIIVLLPKGHCTKIQELQMTTVLKQNVHVFGVEGNSDELDEPIKTVFADVAFVKKHNLMSLNSINWSRVLVQMAHHFFAYFQCTPSLDTHPLPLVEVVVPTGAAGNLAAGYIAQKIGLPIRLVVAVNRNDIIHRTVQQGDFSLSEAVKSTLASAMDIQVPYNMERVFWLLSGSDSQVTRALMEQFERTQSVNLPKELHSKLSEAVTSVSVSDEAITQTMGRCWDENQYLLCPHSAVAVNYHYQQIDRQQPSTPRCCLAPASAAKFPEAVLAAGLTPETPAEIVALEHKETRCTLMRRGDNWMLMLRDTIEDLSRQWRSHALNTSQ</sequence>
<protein>
    <recommendedName>
        <fullName>Threonine synthase-like 2</fullName>
        <shortName>TSH2</shortName>
        <ecNumber>4.2.3.-</ecNumber>
    </recommendedName>
    <alternativeName>
        <fullName>Secreted osteoclastogenic factor of activated T-cells</fullName>
        <shortName>SOFAT</shortName>
    </alternativeName>
</protein>
<dbReference type="EC" id="4.2.3.-"/>
<dbReference type="EMBL" id="HM185274">
    <property type="protein sequence ID" value="ADL14696.1"/>
    <property type="molecule type" value="mRNA"/>
</dbReference>
<dbReference type="EMBL" id="AK001778">
    <property type="protein sequence ID" value="BAA91904.1"/>
    <property type="status" value="ALT_INIT"/>
    <property type="molecule type" value="mRNA"/>
</dbReference>
<dbReference type="EMBL" id="AK095303">
    <property type="protein sequence ID" value="BAG53023.1"/>
    <property type="molecule type" value="mRNA"/>
</dbReference>
<dbReference type="EMBL" id="AC092836">
    <property type="protein sequence ID" value="AAX88906.1"/>
    <property type="status" value="ALT_SEQ"/>
    <property type="molecule type" value="Genomic_DNA"/>
</dbReference>
<dbReference type="EMBL" id="BC035315">
    <property type="protein sequence ID" value="AAH35315.1"/>
    <property type="molecule type" value="mRNA"/>
</dbReference>
<dbReference type="EMBL" id="BC047758">
    <property type="protein sequence ID" value="AAH47758.2"/>
    <property type="molecule type" value="mRNA"/>
</dbReference>
<dbReference type="EMBL" id="BC064423">
    <property type="protein sequence ID" value="AAH64423.1"/>
    <property type="molecule type" value="mRNA"/>
</dbReference>
<dbReference type="CCDS" id="CCDS2002.2">
    <molecule id="Q86YJ6-1"/>
</dbReference>
<dbReference type="CCDS" id="CCDS58718.1">
    <molecule id="Q86YJ6-2"/>
</dbReference>
<dbReference type="CCDS" id="CCDS92801.1">
    <molecule id="Q86YJ6-3"/>
</dbReference>
<dbReference type="RefSeq" id="NP_001231605.1">
    <molecule id="Q86YJ6-2"/>
    <property type="nucleotide sequence ID" value="NM_001244676.2"/>
</dbReference>
<dbReference type="RefSeq" id="NP_001371312.1">
    <molecule id="Q86YJ6-3"/>
    <property type="nucleotide sequence ID" value="NM_001384383.1"/>
</dbReference>
<dbReference type="RefSeq" id="NP_060741.3">
    <molecule id="Q86YJ6-1"/>
    <property type="nucleotide sequence ID" value="NM_018271.4"/>
</dbReference>
<dbReference type="RefSeq" id="XP_005264457.1">
    <property type="nucleotide sequence ID" value="XM_005264400.4"/>
</dbReference>
<dbReference type="RefSeq" id="XP_005264458.1">
    <molecule id="Q86YJ6-1"/>
    <property type="nucleotide sequence ID" value="XM_005264401.6"/>
</dbReference>
<dbReference type="RefSeq" id="XP_005264460.1">
    <property type="nucleotide sequence ID" value="XM_005264403.4"/>
</dbReference>
<dbReference type="RefSeq" id="XP_006712106.1">
    <molecule id="Q86YJ6-2"/>
    <property type="nucleotide sequence ID" value="XM_006712043.3"/>
</dbReference>
<dbReference type="RefSeq" id="XP_024308743.1">
    <molecule id="Q86YJ6-1"/>
    <property type="nucleotide sequence ID" value="XM_024452975.2"/>
</dbReference>
<dbReference type="RefSeq" id="XP_047300852.1">
    <molecule id="Q86YJ6-1"/>
    <property type="nucleotide sequence ID" value="XM_047444896.1"/>
</dbReference>
<dbReference type="RefSeq" id="XP_047300854.1">
    <molecule id="Q86YJ6-3"/>
    <property type="nucleotide sequence ID" value="XM_047444898.1"/>
</dbReference>
<dbReference type="SMR" id="Q86YJ6"/>
<dbReference type="BioGRID" id="120549">
    <property type="interactions" value="1"/>
</dbReference>
<dbReference type="FunCoup" id="Q86YJ6">
    <property type="interactions" value="4"/>
</dbReference>
<dbReference type="IntAct" id="Q86YJ6">
    <property type="interactions" value="3"/>
</dbReference>
<dbReference type="STRING" id="9606.ENSP00000327323"/>
<dbReference type="GlyGen" id="Q86YJ6">
    <property type="glycosylation" value="1 site, 1 O-linked glycan (1 site)"/>
</dbReference>
<dbReference type="PhosphoSitePlus" id="Q86YJ6"/>
<dbReference type="BioMuta" id="THNSL2"/>
<dbReference type="DMDM" id="313104279"/>
<dbReference type="jPOST" id="Q86YJ6"/>
<dbReference type="MassIVE" id="Q86YJ6"/>
<dbReference type="PaxDb" id="9606-ENSP00000327323"/>
<dbReference type="PeptideAtlas" id="Q86YJ6"/>
<dbReference type="ProteomicsDB" id="70421">
    <molecule id="Q86YJ6-1"/>
</dbReference>
<dbReference type="ProteomicsDB" id="70422">
    <molecule id="Q86YJ6-2"/>
</dbReference>
<dbReference type="ProteomicsDB" id="70423">
    <molecule id="Q86YJ6-3"/>
</dbReference>
<dbReference type="ProteomicsDB" id="70424">
    <molecule id="Q86YJ6-4"/>
</dbReference>
<dbReference type="ProteomicsDB" id="70425">
    <molecule id="Q86YJ6-5"/>
</dbReference>
<dbReference type="Antibodypedia" id="32227">
    <property type="antibodies" value="132 antibodies from 27 providers"/>
</dbReference>
<dbReference type="DNASU" id="55258"/>
<dbReference type="Ensembl" id="ENST00000324166.7">
    <molecule id="Q86YJ6-1"/>
    <property type="protein sequence ID" value="ENSP00000327323.5"/>
    <property type="gene ID" value="ENSG00000144115.18"/>
</dbReference>
<dbReference type="Ensembl" id="ENST00000343544.8">
    <molecule id="Q86YJ6-2"/>
    <property type="protein sequence ID" value="ENSP00000339563.4"/>
    <property type="gene ID" value="ENSG00000144115.18"/>
</dbReference>
<dbReference type="Ensembl" id="ENST00000496844.6">
    <molecule id="Q86YJ6-3"/>
    <property type="protein sequence ID" value="ENSP00000501447.1"/>
    <property type="gene ID" value="ENSG00000144115.18"/>
</dbReference>
<dbReference type="Ensembl" id="ENST00000674334.2">
    <molecule id="Q86YJ6-1"/>
    <property type="protein sequence ID" value="ENSP00000501453.1"/>
    <property type="gene ID" value="ENSG00000144115.18"/>
</dbReference>
<dbReference type="GeneID" id="55258"/>
<dbReference type="KEGG" id="hsa:55258"/>
<dbReference type="MANE-Select" id="ENST00000674334.2">
    <property type="protein sequence ID" value="ENSP00000501453.1"/>
    <property type="RefSeq nucleotide sequence ID" value="NM_018271.5"/>
    <property type="RefSeq protein sequence ID" value="NP_060741.3"/>
</dbReference>
<dbReference type="UCSC" id="uc002ssw.5">
    <molecule id="Q86YJ6-1"/>
    <property type="organism name" value="human"/>
</dbReference>
<dbReference type="AGR" id="HGNC:25602"/>
<dbReference type="CTD" id="55258"/>
<dbReference type="DisGeNET" id="55258"/>
<dbReference type="GeneCards" id="THNSL2"/>
<dbReference type="HGNC" id="HGNC:25602">
    <property type="gene designation" value="THNSL2"/>
</dbReference>
<dbReference type="HPA" id="ENSG00000144115">
    <property type="expression patterns" value="Low tissue specificity"/>
</dbReference>
<dbReference type="MIM" id="611261">
    <property type="type" value="gene"/>
</dbReference>
<dbReference type="neXtProt" id="NX_Q86YJ6"/>
<dbReference type="OpenTargets" id="ENSG00000144115"/>
<dbReference type="PharmGKB" id="PA162405692"/>
<dbReference type="VEuPathDB" id="HostDB:ENSG00000144115"/>
<dbReference type="eggNOG" id="KOG2616">
    <property type="taxonomic scope" value="Eukaryota"/>
</dbReference>
<dbReference type="GeneTree" id="ENSGT00940000158503"/>
<dbReference type="HOGENOM" id="CLU_015170_1_1_1"/>
<dbReference type="InParanoid" id="Q86YJ6"/>
<dbReference type="OMA" id="NFERYLY"/>
<dbReference type="OrthoDB" id="5203861at2759"/>
<dbReference type="PAN-GO" id="Q86YJ6">
    <property type="GO annotations" value="4 GO annotations based on evolutionary models"/>
</dbReference>
<dbReference type="PhylomeDB" id="Q86YJ6"/>
<dbReference type="TreeFam" id="TF329641"/>
<dbReference type="PathwayCommons" id="Q86YJ6"/>
<dbReference type="SignaLink" id="Q86YJ6"/>
<dbReference type="BioGRID-ORCS" id="55258">
    <property type="hits" value="9 hits in 1145 CRISPR screens"/>
</dbReference>
<dbReference type="ChiTaRS" id="THNSL2">
    <property type="organism name" value="human"/>
</dbReference>
<dbReference type="GenomeRNAi" id="55258"/>
<dbReference type="Pharos" id="Q86YJ6">
    <property type="development level" value="Tbio"/>
</dbReference>
<dbReference type="PRO" id="PR:Q86YJ6"/>
<dbReference type="Proteomes" id="UP000005640">
    <property type="component" value="Chromosome 2"/>
</dbReference>
<dbReference type="RNAct" id="Q86YJ6">
    <property type="molecule type" value="protein"/>
</dbReference>
<dbReference type="Bgee" id="ENSG00000144115">
    <property type="expression patterns" value="Expressed in right lobe of liver and 163 other cell types or tissues"/>
</dbReference>
<dbReference type="ExpressionAtlas" id="Q86YJ6">
    <property type="expression patterns" value="baseline and differential"/>
</dbReference>
<dbReference type="GO" id="GO:0005615">
    <property type="term" value="C:extracellular space"/>
    <property type="evidence" value="ECO:0007669"/>
    <property type="project" value="UniProtKB-KW"/>
</dbReference>
<dbReference type="GO" id="GO:0005125">
    <property type="term" value="F:cytokine activity"/>
    <property type="evidence" value="ECO:0007669"/>
    <property type="project" value="UniProtKB-KW"/>
</dbReference>
<dbReference type="GO" id="GO:0016829">
    <property type="term" value="F:lyase activity"/>
    <property type="evidence" value="ECO:0007669"/>
    <property type="project" value="UniProtKB-KW"/>
</dbReference>
<dbReference type="GO" id="GO:0016791">
    <property type="term" value="F:phosphatase activity"/>
    <property type="evidence" value="ECO:0000250"/>
    <property type="project" value="ARUK-UCL"/>
</dbReference>
<dbReference type="GO" id="GO:0030170">
    <property type="term" value="F:pyridoxal phosphate binding"/>
    <property type="evidence" value="ECO:0000250"/>
    <property type="project" value="BHF-UCL"/>
</dbReference>
<dbReference type="GO" id="GO:0070905">
    <property type="term" value="F:serine binding"/>
    <property type="evidence" value="ECO:0000250"/>
    <property type="project" value="BHF-UCL"/>
</dbReference>
<dbReference type="GO" id="GO:0046360">
    <property type="term" value="P:2-oxobutyrate biosynthetic process"/>
    <property type="evidence" value="ECO:0000318"/>
    <property type="project" value="GO_Central"/>
</dbReference>
<dbReference type="GO" id="GO:0009071">
    <property type="term" value="P:serine family amino acid catabolic process"/>
    <property type="evidence" value="ECO:0000318"/>
    <property type="project" value="GO_Central"/>
</dbReference>
<dbReference type="CDD" id="cd01560">
    <property type="entry name" value="Thr-synth_2"/>
    <property type="match status" value="1"/>
</dbReference>
<dbReference type="FunFam" id="3.90.1380.10:FF:000003">
    <property type="entry name" value="THR4p Threonine synthase"/>
    <property type="match status" value="1"/>
</dbReference>
<dbReference type="FunFam" id="3.40.50.1100:FF:000047">
    <property type="entry name" value="Threonine synthase like 2"/>
    <property type="match status" value="1"/>
</dbReference>
<dbReference type="Gene3D" id="3.40.50.1100">
    <property type="match status" value="2"/>
</dbReference>
<dbReference type="Gene3D" id="3.90.1380.10">
    <property type="entry name" value="Threonine synthase, N-terminal domain"/>
    <property type="match status" value="1"/>
</dbReference>
<dbReference type="InterPro" id="IPR029144">
    <property type="entry name" value="Thr_synth_N"/>
</dbReference>
<dbReference type="InterPro" id="IPR037158">
    <property type="entry name" value="Thr_synth_N_sf"/>
</dbReference>
<dbReference type="InterPro" id="IPR004450">
    <property type="entry name" value="Thr_synthase-like"/>
</dbReference>
<dbReference type="InterPro" id="IPR051166">
    <property type="entry name" value="Threonine_Synthase"/>
</dbReference>
<dbReference type="InterPro" id="IPR001926">
    <property type="entry name" value="TrpB-like_PALP"/>
</dbReference>
<dbReference type="InterPro" id="IPR036052">
    <property type="entry name" value="TrpB-like_PALP_sf"/>
</dbReference>
<dbReference type="NCBIfam" id="TIGR00260">
    <property type="entry name" value="thrC"/>
    <property type="match status" value="1"/>
</dbReference>
<dbReference type="PANTHER" id="PTHR42690">
    <property type="entry name" value="THREONINE SYNTHASE FAMILY MEMBER"/>
    <property type="match status" value="1"/>
</dbReference>
<dbReference type="PANTHER" id="PTHR42690:SF1">
    <property type="entry name" value="THREONINE SYNTHASE-LIKE 2"/>
    <property type="match status" value="1"/>
</dbReference>
<dbReference type="Pfam" id="PF00291">
    <property type="entry name" value="PALP"/>
    <property type="match status" value="1"/>
</dbReference>
<dbReference type="Pfam" id="PF14821">
    <property type="entry name" value="Thr_synth_N"/>
    <property type="match status" value="1"/>
</dbReference>
<dbReference type="SUPFAM" id="SSF53686">
    <property type="entry name" value="Tryptophan synthase beta subunit-like PLP-dependent enzymes"/>
    <property type="match status" value="1"/>
</dbReference>
<proteinExistence type="evidence at protein level"/>
<gene>
    <name type="primary">THNSL2</name>
</gene>
<organism>
    <name type="scientific">Homo sapiens</name>
    <name type="common">Human</name>
    <dbReference type="NCBI Taxonomy" id="9606"/>
    <lineage>
        <taxon>Eukaryota</taxon>
        <taxon>Metazoa</taxon>
        <taxon>Chordata</taxon>
        <taxon>Craniata</taxon>
        <taxon>Vertebrata</taxon>
        <taxon>Euteleostomi</taxon>
        <taxon>Mammalia</taxon>
        <taxon>Eutheria</taxon>
        <taxon>Euarchontoglires</taxon>
        <taxon>Primates</taxon>
        <taxon>Haplorrhini</taxon>
        <taxon>Catarrhini</taxon>
        <taxon>Hominidae</taxon>
        <taxon>Homo</taxon>
    </lineage>
</organism>
<feature type="chain" id="PRO_0000306407" description="Threonine synthase-like 2">
    <location>
        <begin position="1"/>
        <end position="484"/>
    </location>
</feature>
<feature type="modified residue" description="N6-(pyridoxal phosphate)lysine" evidence="1">
    <location>
        <position position="113"/>
    </location>
</feature>
<feature type="splice variant" id="VSP_041659" description="In isoform SOFAT." evidence="7">
    <location>
        <begin position="1"/>
        <end position="158"/>
    </location>
</feature>
<feature type="splice variant" id="VSP_028468" description="In isoform 4." evidence="5">
    <location>
        <begin position="214"/>
        <end position="274"/>
    </location>
</feature>
<feature type="splice variant" id="VSP_028469" description="In isoform 2." evidence="6">
    <original>LSEAVTSVSVSDEAITQTMGRCWDENQYLLCPHSAVAVNYHYQQIDRQQPSTPRCCLAPASAAKFPEAVLAAGLTPETPAEIVALEHKETRCTLMRRGDNWMLMLRDTIEDLSRQWRSHALNTSQ</original>
    <variation>WERQDYEKMAVMECDGCCVELCLGNCGPRRGSVTDIPGTAMVRGGG</variation>
    <location>
        <begin position="360"/>
        <end position="484"/>
    </location>
</feature>
<feature type="splice variant" id="VSP_028470" description="In isoform 3." evidence="6">
    <original>LSEAVTSVSVSDEAITQTMGRCWDENQYLLCPHSAVAVNYHYQQIDRQQPSTPRCCLAPASAAKFPEAVLAAGLTPETPAEIVALEHKETRCTLMRRGDNWMLMLRDTIEDLSRQWRSHALNTSQ</original>
    <variation>HSPVLPRPCLCSQVPGSCPGCWPDP</variation>
    <location>
        <begin position="360"/>
        <end position="484"/>
    </location>
</feature>
<feature type="splice variant" id="VSP_041660" description="In isoform SOFAT." evidence="7">
    <original>LSEAVTSVSVSDEAITQTMGRCWDENQYLLCPHSAVAVNYHYQQIDRQQPSTPRCCLAPASAAKFPEAVLAAGLTPETPAEIVALEHKETRCTLMRRGDNWMLMLRDTIEDLSRQWRSHALNTSQ</original>
    <variation>WERQDYEKMAVMECDGCCVELCLGNCGPRRGSVTDIPGTAMVRGGD</variation>
    <location>
        <begin position="360"/>
        <end position="484"/>
    </location>
</feature>
<feature type="sequence variant" id="VAR_054635" description="In dbSNP:rs4129190." evidence="2 3">
    <original>G</original>
    <variation>E</variation>
    <location>
        <position position="41"/>
    </location>
</feature>
<feature type="sequence variant" id="VAR_054636" description="In dbSNP:rs35541720.">
    <original>V</original>
    <variation>I</variation>
    <location>
        <position position="108"/>
    </location>
</feature>
<feature type="sequence variant" id="VAR_054637" description="In dbSNP:rs34136143.">
    <original>T</original>
    <variation>N</variation>
    <location>
        <position position="204"/>
    </location>
</feature>
<feature type="sequence variant" id="VAR_054638" description="In dbSNP:rs17855905." evidence="3">
    <original>R</original>
    <variation>G</variation>
    <location>
        <position position="324"/>
    </location>
</feature>
<feature type="sequence conflict" description="In Ref. 2; BAA91904." evidence="8" ref="2">
    <original>I</original>
    <variation>V</variation>
    <location>
        <position position="63"/>
    </location>
</feature>
<evidence type="ECO:0000250" key="1"/>
<evidence type="ECO:0000269" key="2">
    <source>
    </source>
</evidence>
<evidence type="ECO:0000269" key="3">
    <source>
    </source>
</evidence>
<evidence type="ECO:0000269" key="4">
    <source>
    </source>
</evidence>
<evidence type="ECO:0000303" key="5">
    <source>
    </source>
</evidence>
<evidence type="ECO:0000303" key="6">
    <source>
    </source>
</evidence>
<evidence type="ECO:0000303" key="7">
    <source>
    </source>
</evidence>
<evidence type="ECO:0000305" key="8"/>
<name>THNS2_HUMAN</name>